<organism>
    <name type="scientific">Phaseolus vulgaris</name>
    <name type="common">Kidney bean</name>
    <name type="synonym">French bean</name>
    <dbReference type="NCBI Taxonomy" id="3885"/>
    <lineage>
        <taxon>Eukaryota</taxon>
        <taxon>Viridiplantae</taxon>
        <taxon>Streptophyta</taxon>
        <taxon>Embryophyta</taxon>
        <taxon>Tracheophyta</taxon>
        <taxon>Spermatophyta</taxon>
        <taxon>Magnoliopsida</taxon>
        <taxon>eudicotyledons</taxon>
        <taxon>Gunneridae</taxon>
        <taxon>Pentapetalae</taxon>
        <taxon>rosids</taxon>
        <taxon>fabids</taxon>
        <taxon>Fabales</taxon>
        <taxon>Fabaceae</taxon>
        <taxon>Papilionoideae</taxon>
        <taxon>50 kb inversion clade</taxon>
        <taxon>NPAAA clade</taxon>
        <taxon>indigoferoid/millettioid clade</taxon>
        <taxon>Phaseoleae</taxon>
        <taxon>Phaseolus</taxon>
    </lineage>
</organism>
<evidence type="ECO:0000269" key="1">
    <source>
    </source>
</evidence>
<evidence type="ECO:0000303" key="2">
    <source>
    </source>
</evidence>
<evidence type="ECO:0000305" key="3"/>
<keyword id="KW-0134">Cell wall</keyword>
<keyword id="KW-0903">Direct protein sequencing</keyword>
<keyword id="KW-0964">Secreted</keyword>
<protein>
    <recommendedName>
        <fullName>45 kDa cell wall protein</fullName>
    </recommendedName>
</protein>
<sequence>NSKPPEALILVKXSQ</sequence>
<name>CWP09_PHAVU</name>
<comment type="subcellular location">
    <subcellularLocation>
        <location evidence="1">Secreted</location>
        <location evidence="1">Cell wall</location>
    </subcellularLocation>
</comment>
<accession>P80768</accession>
<proteinExistence type="evidence at protein level"/>
<reference evidence="3" key="1">
    <citation type="journal article" date="1997" name="J. Biol. Chem.">
        <title>Differential extraction and protein sequencing reveals major differences in patterns of primary cell wall proteins from plants.</title>
        <authorList>
            <person name="Robertson D."/>
            <person name="Mitchell G.P."/>
            <person name="Gilroy J.S."/>
            <person name="Gerrish C."/>
            <person name="Bolwell G.P."/>
            <person name="Slabas A.R."/>
        </authorList>
    </citation>
    <scope>PROTEIN SEQUENCE</scope>
    <scope>SUBCELLULAR LOCATION</scope>
</reference>
<dbReference type="GO" id="GO:0005576">
    <property type="term" value="C:extracellular region"/>
    <property type="evidence" value="ECO:0007669"/>
    <property type="project" value="UniProtKB-KW"/>
</dbReference>
<feature type="chain" id="PRO_0000079656" description="45 kDa cell wall protein">
    <location>
        <begin position="1"/>
        <end position="15" status="greater than"/>
    </location>
</feature>
<feature type="non-terminal residue" evidence="2">
    <location>
        <position position="15"/>
    </location>
</feature>